<proteinExistence type="inferred from homology"/>
<accession>A7MPI4</accession>
<feature type="chain" id="PRO_1000052571" description="Large ribosomal subunit protein uL22">
    <location>
        <begin position="1"/>
        <end position="110"/>
    </location>
</feature>
<name>RL22_CROS8</name>
<evidence type="ECO:0000255" key="1">
    <source>
        <dbReference type="HAMAP-Rule" id="MF_01331"/>
    </source>
</evidence>
<evidence type="ECO:0000305" key="2"/>
<gene>
    <name evidence="1" type="primary">rplV</name>
    <name type="ordered locus">ESA_00010</name>
</gene>
<sequence>METIAKHRHARSSAQKVRLVADLIRGKKVSQALDILTYTNKKAAVLVKKVLESAIANAEHNDGADIDDLKVTKIFVDEGPSMKRIMPRAKGRADRILKRTSHITVVVSDR</sequence>
<dbReference type="EMBL" id="CP000783">
    <property type="protein sequence ID" value="ABU75319.1"/>
    <property type="molecule type" value="Genomic_DNA"/>
</dbReference>
<dbReference type="RefSeq" id="WP_000447529.1">
    <property type="nucleotide sequence ID" value="NC_009778.1"/>
</dbReference>
<dbReference type="SMR" id="A7MPI4"/>
<dbReference type="GeneID" id="93778672"/>
<dbReference type="KEGG" id="esa:ESA_00010"/>
<dbReference type="HOGENOM" id="CLU_083987_3_3_6"/>
<dbReference type="Proteomes" id="UP000000260">
    <property type="component" value="Chromosome"/>
</dbReference>
<dbReference type="GO" id="GO:0022625">
    <property type="term" value="C:cytosolic large ribosomal subunit"/>
    <property type="evidence" value="ECO:0007669"/>
    <property type="project" value="TreeGrafter"/>
</dbReference>
<dbReference type="GO" id="GO:0019843">
    <property type="term" value="F:rRNA binding"/>
    <property type="evidence" value="ECO:0007669"/>
    <property type="project" value="UniProtKB-UniRule"/>
</dbReference>
<dbReference type="GO" id="GO:0003735">
    <property type="term" value="F:structural constituent of ribosome"/>
    <property type="evidence" value="ECO:0007669"/>
    <property type="project" value="InterPro"/>
</dbReference>
<dbReference type="GO" id="GO:0006412">
    <property type="term" value="P:translation"/>
    <property type="evidence" value="ECO:0007669"/>
    <property type="project" value="UniProtKB-UniRule"/>
</dbReference>
<dbReference type="CDD" id="cd00336">
    <property type="entry name" value="Ribosomal_L22"/>
    <property type="match status" value="1"/>
</dbReference>
<dbReference type="FunFam" id="3.90.470.10:FF:000001">
    <property type="entry name" value="50S ribosomal protein L22"/>
    <property type="match status" value="1"/>
</dbReference>
<dbReference type="Gene3D" id="3.90.470.10">
    <property type="entry name" value="Ribosomal protein L22/L17"/>
    <property type="match status" value="1"/>
</dbReference>
<dbReference type="HAMAP" id="MF_01331_B">
    <property type="entry name" value="Ribosomal_uL22_B"/>
    <property type="match status" value="1"/>
</dbReference>
<dbReference type="InterPro" id="IPR001063">
    <property type="entry name" value="Ribosomal_uL22"/>
</dbReference>
<dbReference type="InterPro" id="IPR005727">
    <property type="entry name" value="Ribosomal_uL22_bac/chlpt-type"/>
</dbReference>
<dbReference type="InterPro" id="IPR047867">
    <property type="entry name" value="Ribosomal_uL22_bac/org-type"/>
</dbReference>
<dbReference type="InterPro" id="IPR018260">
    <property type="entry name" value="Ribosomal_uL22_CS"/>
</dbReference>
<dbReference type="InterPro" id="IPR036394">
    <property type="entry name" value="Ribosomal_uL22_sf"/>
</dbReference>
<dbReference type="NCBIfam" id="TIGR01044">
    <property type="entry name" value="rplV_bact"/>
    <property type="match status" value="1"/>
</dbReference>
<dbReference type="PANTHER" id="PTHR13501">
    <property type="entry name" value="CHLOROPLAST 50S RIBOSOMAL PROTEIN L22-RELATED"/>
    <property type="match status" value="1"/>
</dbReference>
<dbReference type="PANTHER" id="PTHR13501:SF8">
    <property type="entry name" value="LARGE RIBOSOMAL SUBUNIT PROTEIN UL22M"/>
    <property type="match status" value="1"/>
</dbReference>
<dbReference type="Pfam" id="PF00237">
    <property type="entry name" value="Ribosomal_L22"/>
    <property type="match status" value="1"/>
</dbReference>
<dbReference type="SUPFAM" id="SSF54843">
    <property type="entry name" value="Ribosomal protein L22"/>
    <property type="match status" value="1"/>
</dbReference>
<dbReference type="PROSITE" id="PS00464">
    <property type="entry name" value="RIBOSOMAL_L22"/>
    <property type="match status" value="1"/>
</dbReference>
<keyword id="KW-1185">Reference proteome</keyword>
<keyword id="KW-0687">Ribonucleoprotein</keyword>
<keyword id="KW-0689">Ribosomal protein</keyword>
<keyword id="KW-0694">RNA-binding</keyword>
<keyword id="KW-0699">rRNA-binding</keyword>
<reference key="1">
    <citation type="journal article" date="2010" name="PLoS ONE">
        <title>Genome sequence of Cronobacter sakazakii BAA-894 and comparative genomic hybridization analysis with other Cronobacter species.</title>
        <authorList>
            <person name="Kucerova E."/>
            <person name="Clifton S.W."/>
            <person name="Xia X.Q."/>
            <person name="Long F."/>
            <person name="Porwollik S."/>
            <person name="Fulton L."/>
            <person name="Fronick C."/>
            <person name="Minx P."/>
            <person name="Kyung K."/>
            <person name="Warren W."/>
            <person name="Fulton R."/>
            <person name="Feng D."/>
            <person name="Wollam A."/>
            <person name="Shah N."/>
            <person name="Bhonagiri V."/>
            <person name="Nash W.E."/>
            <person name="Hallsworth-Pepin K."/>
            <person name="Wilson R.K."/>
            <person name="McClelland M."/>
            <person name="Forsythe S.J."/>
        </authorList>
    </citation>
    <scope>NUCLEOTIDE SEQUENCE [LARGE SCALE GENOMIC DNA]</scope>
    <source>
        <strain>ATCC BAA-894</strain>
    </source>
</reference>
<protein>
    <recommendedName>
        <fullName evidence="1">Large ribosomal subunit protein uL22</fullName>
    </recommendedName>
    <alternativeName>
        <fullName evidence="2">50S ribosomal protein L22</fullName>
    </alternativeName>
</protein>
<organism>
    <name type="scientific">Cronobacter sakazakii (strain ATCC BAA-894)</name>
    <name type="common">Enterobacter sakazakii</name>
    <dbReference type="NCBI Taxonomy" id="290339"/>
    <lineage>
        <taxon>Bacteria</taxon>
        <taxon>Pseudomonadati</taxon>
        <taxon>Pseudomonadota</taxon>
        <taxon>Gammaproteobacteria</taxon>
        <taxon>Enterobacterales</taxon>
        <taxon>Enterobacteriaceae</taxon>
        <taxon>Cronobacter</taxon>
    </lineage>
</organism>
<comment type="function">
    <text evidence="1">This protein binds specifically to 23S rRNA; its binding is stimulated by other ribosomal proteins, e.g. L4, L17, and L20. It is important during the early stages of 50S assembly. It makes multiple contacts with different domains of the 23S rRNA in the assembled 50S subunit and ribosome (By similarity).</text>
</comment>
<comment type="function">
    <text evidence="1">The globular domain of the protein is located near the polypeptide exit tunnel on the outside of the subunit, while an extended beta-hairpin is found that lines the wall of the exit tunnel in the center of the 70S ribosome.</text>
</comment>
<comment type="subunit">
    <text evidence="1">Part of the 50S ribosomal subunit.</text>
</comment>
<comment type="similarity">
    <text evidence="1">Belongs to the universal ribosomal protein uL22 family.</text>
</comment>